<accession>B9WLD6</accession>
<keyword id="KW-0472">Membrane</keyword>
<keyword id="KW-0496">Mitochondrion</keyword>
<keyword id="KW-0999">Mitochondrion inner membrane</keyword>
<keyword id="KW-0809">Transit peptide</keyword>
<protein>
    <recommendedName>
        <fullName>ATPase synthesis protein 25, mitochondrial</fullName>
    </recommendedName>
</protein>
<dbReference type="EMBL" id="FM992695">
    <property type="protein sequence ID" value="CAX39870.1"/>
    <property type="molecule type" value="Genomic_DNA"/>
</dbReference>
<dbReference type="RefSeq" id="XP_002421897.1">
    <property type="nucleotide sequence ID" value="XM_002421852.1"/>
</dbReference>
<dbReference type="SMR" id="B9WLD6"/>
<dbReference type="GeneID" id="8050211"/>
<dbReference type="KEGG" id="cdu:CD36_28500"/>
<dbReference type="CGD" id="CAL0000170685">
    <property type="gene designation" value="Cd36_28500"/>
</dbReference>
<dbReference type="VEuPathDB" id="FungiDB:CD36_28500"/>
<dbReference type="eggNOG" id="ENOG502RGZN">
    <property type="taxonomic scope" value="Eukaryota"/>
</dbReference>
<dbReference type="HOGENOM" id="CLU_454918_0_0_1"/>
<dbReference type="OrthoDB" id="107372at2759"/>
<dbReference type="Proteomes" id="UP000002605">
    <property type="component" value="Chromosome R"/>
</dbReference>
<dbReference type="GO" id="GO:0005743">
    <property type="term" value="C:mitochondrial inner membrane"/>
    <property type="evidence" value="ECO:0007669"/>
    <property type="project" value="UniProtKB-SubCell"/>
</dbReference>
<dbReference type="GO" id="GO:0140053">
    <property type="term" value="P:mitochondrial gene expression"/>
    <property type="evidence" value="ECO:0007669"/>
    <property type="project" value="InterPro"/>
</dbReference>
<dbReference type="GO" id="GO:0048255">
    <property type="term" value="P:mRNA stabilization"/>
    <property type="evidence" value="ECO:0007669"/>
    <property type="project" value="TreeGrafter"/>
</dbReference>
<dbReference type="Gene3D" id="3.30.460.10">
    <property type="entry name" value="Beta Polymerase, domain 2"/>
    <property type="match status" value="1"/>
</dbReference>
<dbReference type="InterPro" id="IPR040152">
    <property type="entry name" value="Atp25"/>
</dbReference>
<dbReference type="InterPro" id="IPR043519">
    <property type="entry name" value="NT_sf"/>
</dbReference>
<dbReference type="PANTHER" id="PTHR28087">
    <property type="entry name" value="ATPASE SYNTHESIS PROTEIN 25, MITOCHONDRIAL"/>
    <property type="match status" value="1"/>
</dbReference>
<dbReference type="PANTHER" id="PTHR28087:SF1">
    <property type="entry name" value="ATPASE SYNTHESIS PROTEIN 25, MITOCHONDRIAL"/>
    <property type="match status" value="1"/>
</dbReference>
<dbReference type="Pfam" id="PF02410">
    <property type="entry name" value="RsfS"/>
    <property type="match status" value="1"/>
</dbReference>
<dbReference type="SUPFAM" id="SSF81301">
    <property type="entry name" value="Nucleotidyltransferase"/>
    <property type="match status" value="1"/>
</dbReference>
<feature type="transit peptide" description="Mitochondrion" evidence="2">
    <location>
        <begin position="1"/>
        <end position="38"/>
    </location>
</feature>
<feature type="chain" id="PRO_0000404465" description="ATPase synthesis protein 25, mitochondrial">
    <location>
        <begin position="39"/>
        <end position="580"/>
    </location>
</feature>
<proteinExistence type="inferred from homology"/>
<gene>
    <name type="primary">ATP25</name>
    <name type="ORF">CD36_28500</name>
</gene>
<evidence type="ECO:0000250" key="1"/>
<evidence type="ECO:0000255" key="2"/>
<evidence type="ECO:0000305" key="3"/>
<reference key="1">
    <citation type="journal article" date="2009" name="Genome Res.">
        <title>Comparative genomics of the fungal pathogens Candida dubliniensis and Candida albicans.</title>
        <authorList>
            <person name="Jackson A.P."/>
            <person name="Gamble J.A."/>
            <person name="Yeomans T."/>
            <person name="Moran G.P."/>
            <person name="Saunders D."/>
            <person name="Harris D."/>
            <person name="Aslett M."/>
            <person name="Barrell J.F."/>
            <person name="Butler G."/>
            <person name="Citiulo F."/>
            <person name="Coleman D.C."/>
            <person name="de Groot P.W.J."/>
            <person name="Goodwin T.J."/>
            <person name="Quail M.A."/>
            <person name="McQuillan J."/>
            <person name="Munro C.A."/>
            <person name="Pain A."/>
            <person name="Poulter R.T."/>
            <person name="Rajandream M.A."/>
            <person name="Renauld H."/>
            <person name="Spiering M.J."/>
            <person name="Tivey A."/>
            <person name="Gow N.A.R."/>
            <person name="Barrell B."/>
            <person name="Sullivan D.J."/>
            <person name="Berriman M."/>
        </authorList>
    </citation>
    <scope>NUCLEOTIDE SEQUENCE [LARGE SCALE GENOMIC DNA]</scope>
    <source>
        <strain>CD36 / ATCC MYA-646 / CBS 7987 / NCPF 3949 / NRRL Y-17841</strain>
    </source>
</reference>
<organism>
    <name type="scientific">Candida dubliniensis (strain CD36 / ATCC MYA-646 / CBS 7987 / NCPF 3949 / NRRL Y-17841)</name>
    <name type="common">Yeast</name>
    <dbReference type="NCBI Taxonomy" id="573826"/>
    <lineage>
        <taxon>Eukaryota</taxon>
        <taxon>Fungi</taxon>
        <taxon>Dikarya</taxon>
        <taxon>Ascomycota</taxon>
        <taxon>Saccharomycotina</taxon>
        <taxon>Pichiomycetes</taxon>
        <taxon>Debaryomycetaceae</taxon>
        <taxon>Candida/Lodderomyces clade</taxon>
        <taxon>Candida</taxon>
    </lineage>
</organism>
<name>ATP25_CANDC</name>
<sequence length="580" mass="66879">MIVRGRCLSRSISKLVSLSSRPVGIISAKSFVTTTNLLQNSKNDSTEASIPWYMREENSSPVEVLNDVEVPELPDNSPQSLQEFVNLLTSEYGLTDLEIFDLSQLPEDHPKSLEEQNDENYVILATGKSEKHIYKAAYELRLYIKHTYEHLPIIEGMSSNSISKVTRRRLAKRVRRGPPATASTFGIGANTWVSCGTGIDGIVIHLLSRERRKSLNLEQLYSDEHENEESYSSPDIDQDRLFFGDRRGFHTSCRKLNSNVLSKIYDSYVLNGNFDTSQKFKAQFDLSFKGSSIEEYNKKFDLYRAINLVNANVVNVNEIEQIIWDKYSSLDLASQSGIDWNTEIIHDTIKYMEYLVDLKTRHSPKEKLHKLSNFISNIMCFSGDSIDLFTIDKFGALLWRLTWVSKDNNALDSANLNDIIKRRGDSEPSTNTISFDNELGRNVRELLRQNKYSSNKETFPLWLREQMMYTFGQAGLWDRFWRDWHSILQSLNKTNERIYFWVITVLFLSKVDNRDALRHLLTKYWSNPSGVSFVADYTKNNNQFNSDNERMALKNVLGHIGEKYNTSPWAREAAQFADSL</sequence>
<comment type="function">
    <text evidence="1">Probable mitochondrial mRNA stabilization factor.</text>
</comment>
<comment type="subcellular location">
    <subcellularLocation>
        <location evidence="1">Mitochondrion inner membrane</location>
        <topology evidence="1">Peripheral membrane protein</topology>
        <orientation evidence="1">Matrix side</orientation>
    </subcellularLocation>
</comment>
<comment type="similarity">
    <text evidence="3">Belongs to the ATP25 family.</text>
</comment>